<sequence length="212" mass="22346">MRLVLASNNAKKLKELGTLLAPAGVELVTQGSLGIAEAEEPHHTFIENALAKARHAAAASGLPAIADDSGLCVDALGGQPGVQSAHYATLDPADIDGLAREALRERQDAANNRRLLSALDGQANRRARFVCTLVAIRSADDPEPLVALGRWEGELLTGLRGSGGFGYDPLLSIPALDATVAQLDAETKNRHSHRALAAEQMVALMRSAWHLA</sequence>
<organism>
    <name type="scientific">Leptothrix cholodnii (strain ATCC 51168 / LMG 8142 / SP-6)</name>
    <name type="common">Leptothrix discophora (strain SP-6)</name>
    <dbReference type="NCBI Taxonomy" id="395495"/>
    <lineage>
        <taxon>Bacteria</taxon>
        <taxon>Pseudomonadati</taxon>
        <taxon>Pseudomonadota</taxon>
        <taxon>Betaproteobacteria</taxon>
        <taxon>Burkholderiales</taxon>
        <taxon>Sphaerotilaceae</taxon>
        <taxon>Leptothrix</taxon>
    </lineage>
</organism>
<evidence type="ECO:0000255" key="1">
    <source>
        <dbReference type="HAMAP-Rule" id="MF_01405"/>
    </source>
</evidence>
<gene>
    <name type="ordered locus">Lcho_0704</name>
</gene>
<reference key="1">
    <citation type="submission" date="2008-03" db="EMBL/GenBank/DDBJ databases">
        <title>Complete sequence of Leptothrix cholodnii SP-6.</title>
        <authorList>
            <consortium name="US DOE Joint Genome Institute"/>
            <person name="Copeland A."/>
            <person name="Lucas S."/>
            <person name="Lapidus A."/>
            <person name="Glavina del Rio T."/>
            <person name="Dalin E."/>
            <person name="Tice H."/>
            <person name="Bruce D."/>
            <person name="Goodwin L."/>
            <person name="Pitluck S."/>
            <person name="Chertkov O."/>
            <person name="Brettin T."/>
            <person name="Detter J.C."/>
            <person name="Han C."/>
            <person name="Kuske C.R."/>
            <person name="Schmutz J."/>
            <person name="Larimer F."/>
            <person name="Land M."/>
            <person name="Hauser L."/>
            <person name="Kyrpides N."/>
            <person name="Lykidis A."/>
            <person name="Emerson D."/>
            <person name="Richardson P."/>
        </authorList>
    </citation>
    <scope>NUCLEOTIDE SEQUENCE [LARGE SCALE GENOMIC DNA]</scope>
    <source>
        <strain>ATCC 51168 / LMG 8142 / SP-6</strain>
    </source>
</reference>
<dbReference type="EC" id="3.6.1.66" evidence="1"/>
<dbReference type="EMBL" id="CP001013">
    <property type="protein sequence ID" value="ACB32979.1"/>
    <property type="molecule type" value="Genomic_DNA"/>
</dbReference>
<dbReference type="RefSeq" id="WP_012345741.1">
    <property type="nucleotide sequence ID" value="NC_010524.1"/>
</dbReference>
<dbReference type="SMR" id="B1Y0J8"/>
<dbReference type="STRING" id="395495.Lcho_0704"/>
<dbReference type="KEGG" id="lch:Lcho_0704"/>
<dbReference type="eggNOG" id="COG0127">
    <property type="taxonomic scope" value="Bacteria"/>
</dbReference>
<dbReference type="HOGENOM" id="CLU_082080_0_3_4"/>
<dbReference type="OrthoDB" id="9807456at2"/>
<dbReference type="Proteomes" id="UP000001693">
    <property type="component" value="Chromosome"/>
</dbReference>
<dbReference type="GO" id="GO:0005829">
    <property type="term" value="C:cytosol"/>
    <property type="evidence" value="ECO:0007669"/>
    <property type="project" value="TreeGrafter"/>
</dbReference>
<dbReference type="GO" id="GO:0035870">
    <property type="term" value="F:dITP diphosphatase activity"/>
    <property type="evidence" value="ECO:0007669"/>
    <property type="project" value="RHEA"/>
</dbReference>
<dbReference type="GO" id="GO:0036220">
    <property type="term" value="F:ITP diphosphatase activity"/>
    <property type="evidence" value="ECO:0007669"/>
    <property type="project" value="UniProtKB-EC"/>
</dbReference>
<dbReference type="GO" id="GO:0046872">
    <property type="term" value="F:metal ion binding"/>
    <property type="evidence" value="ECO:0007669"/>
    <property type="project" value="UniProtKB-KW"/>
</dbReference>
<dbReference type="GO" id="GO:0000166">
    <property type="term" value="F:nucleotide binding"/>
    <property type="evidence" value="ECO:0007669"/>
    <property type="project" value="UniProtKB-KW"/>
</dbReference>
<dbReference type="GO" id="GO:0017111">
    <property type="term" value="F:ribonucleoside triphosphate phosphatase activity"/>
    <property type="evidence" value="ECO:0007669"/>
    <property type="project" value="InterPro"/>
</dbReference>
<dbReference type="GO" id="GO:0036222">
    <property type="term" value="F:XTP diphosphatase activity"/>
    <property type="evidence" value="ECO:0007669"/>
    <property type="project" value="RHEA"/>
</dbReference>
<dbReference type="GO" id="GO:0009117">
    <property type="term" value="P:nucleotide metabolic process"/>
    <property type="evidence" value="ECO:0007669"/>
    <property type="project" value="UniProtKB-KW"/>
</dbReference>
<dbReference type="GO" id="GO:0009146">
    <property type="term" value="P:purine nucleoside triphosphate catabolic process"/>
    <property type="evidence" value="ECO:0007669"/>
    <property type="project" value="UniProtKB-UniRule"/>
</dbReference>
<dbReference type="CDD" id="cd00515">
    <property type="entry name" value="HAM1"/>
    <property type="match status" value="1"/>
</dbReference>
<dbReference type="FunFam" id="3.90.950.10:FF:000001">
    <property type="entry name" value="dITP/XTP pyrophosphatase"/>
    <property type="match status" value="1"/>
</dbReference>
<dbReference type="Gene3D" id="3.90.950.10">
    <property type="match status" value="1"/>
</dbReference>
<dbReference type="HAMAP" id="MF_01405">
    <property type="entry name" value="Non_canon_purine_NTPase"/>
    <property type="match status" value="1"/>
</dbReference>
<dbReference type="InterPro" id="IPR020922">
    <property type="entry name" value="dITP/XTP_pyrophosphatase"/>
</dbReference>
<dbReference type="InterPro" id="IPR029001">
    <property type="entry name" value="ITPase-like_fam"/>
</dbReference>
<dbReference type="InterPro" id="IPR002637">
    <property type="entry name" value="RdgB/HAM1"/>
</dbReference>
<dbReference type="NCBIfam" id="TIGR00042">
    <property type="entry name" value="RdgB/HAM1 family non-canonical purine NTP pyrophosphatase"/>
    <property type="match status" value="1"/>
</dbReference>
<dbReference type="PANTHER" id="PTHR11067:SF9">
    <property type="entry name" value="INOSINE TRIPHOSPHATE PYROPHOSPHATASE"/>
    <property type="match status" value="1"/>
</dbReference>
<dbReference type="PANTHER" id="PTHR11067">
    <property type="entry name" value="INOSINE TRIPHOSPHATE PYROPHOSPHATASE/HAM1 PROTEIN"/>
    <property type="match status" value="1"/>
</dbReference>
<dbReference type="Pfam" id="PF01725">
    <property type="entry name" value="Ham1p_like"/>
    <property type="match status" value="1"/>
</dbReference>
<dbReference type="SUPFAM" id="SSF52972">
    <property type="entry name" value="ITPase-like"/>
    <property type="match status" value="1"/>
</dbReference>
<comment type="function">
    <text evidence="1">Pyrophosphatase that catalyzes the hydrolysis of nucleoside triphosphates to their monophosphate derivatives, with a high preference for the non-canonical purine nucleotides XTP (xanthosine triphosphate), dITP (deoxyinosine triphosphate) and ITP. Seems to function as a house-cleaning enzyme that removes non-canonical purine nucleotides from the nucleotide pool, thus preventing their incorporation into DNA/RNA and avoiding chromosomal lesions.</text>
</comment>
<comment type="catalytic activity">
    <reaction evidence="1">
        <text>XTP + H2O = XMP + diphosphate + H(+)</text>
        <dbReference type="Rhea" id="RHEA:28610"/>
        <dbReference type="ChEBI" id="CHEBI:15377"/>
        <dbReference type="ChEBI" id="CHEBI:15378"/>
        <dbReference type="ChEBI" id="CHEBI:33019"/>
        <dbReference type="ChEBI" id="CHEBI:57464"/>
        <dbReference type="ChEBI" id="CHEBI:61314"/>
        <dbReference type="EC" id="3.6.1.66"/>
    </reaction>
</comment>
<comment type="catalytic activity">
    <reaction evidence="1">
        <text>dITP + H2O = dIMP + diphosphate + H(+)</text>
        <dbReference type="Rhea" id="RHEA:28342"/>
        <dbReference type="ChEBI" id="CHEBI:15377"/>
        <dbReference type="ChEBI" id="CHEBI:15378"/>
        <dbReference type="ChEBI" id="CHEBI:33019"/>
        <dbReference type="ChEBI" id="CHEBI:61194"/>
        <dbReference type="ChEBI" id="CHEBI:61382"/>
        <dbReference type="EC" id="3.6.1.66"/>
    </reaction>
</comment>
<comment type="catalytic activity">
    <reaction evidence="1">
        <text>ITP + H2O = IMP + diphosphate + H(+)</text>
        <dbReference type="Rhea" id="RHEA:29399"/>
        <dbReference type="ChEBI" id="CHEBI:15377"/>
        <dbReference type="ChEBI" id="CHEBI:15378"/>
        <dbReference type="ChEBI" id="CHEBI:33019"/>
        <dbReference type="ChEBI" id="CHEBI:58053"/>
        <dbReference type="ChEBI" id="CHEBI:61402"/>
        <dbReference type="EC" id="3.6.1.66"/>
    </reaction>
</comment>
<comment type="cofactor">
    <cofactor evidence="1">
        <name>Mg(2+)</name>
        <dbReference type="ChEBI" id="CHEBI:18420"/>
    </cofactor>
    <text evidence="1">Binds 1 Mg(2+) ion per subunit.</text>
</comment>
<comment type="subunit">
    <text evidence="1">Homodimer.</text>
</comment>
<comment type="similarity">
    <text evidence="1">Belongs to the HAM1 NTPase family.</text>
</comment>
<feature type="chain" id="PRO_1000145493" description="dITP/XTP pyrophosphatase">
    <location>
        <begin position="1"/>
        <end position="212"/>
    </location>
</feature>
<feature type="active site" description="Proton acceptor" evidence="1">
    <location>
        <position position="68"/>
    </location>
</feature>
<feature type="binding site" evidence="1">
    <location>
        <begin position="7"/>
        <end position="12"/>
    </location>
    <ligand>
        <name>substrate</name>
    </ligand>
</feature>
<feature type="binding site" evidence="1">
    <location>
        <position position="39"/>
    </location>
    <ligand>
        <name>Mg(2+)</name>
        <dbReference type="ChEBI" id="CHEBI:18420"/>
    </ligand>
</feature>
<feature type="binding site" evidence="1">
    <location>
        <position position="68"/>
    </location>
    <ligand>
        <name>Mg(2+)</name>
        <dbReference type="ChEBI" id="CHEBI:18420"/>
    </ligand>
</feature>
<feature type="binding site" evidence="1">
    <location>
        <position position="69"/>
    </location>
    <ligand>
        <name>substrate</name>
    </ligand>
</feature>
<feature type="binding site" evidence="1">
    <location>
        <begin position="165"/>
        <end position="168"/>
    </location>
    <ligand>
        <name>substrate</name>
    </ligand>
</feature>
<feature type="binding site" evidence="1">
    <location>
        <position position="188"/>
    </location>
    <ligand>
        <name>substrate</name>
    </ligand>
</feature>
<feature type="binding site" evidence="1">
    <location>
        <begin position="193"/>
        <end position="194"/>
    </location>
    <ligand>
        <name>substrate</name>
    </ligand>
</feature>
<proteinExistence type="inferred from homology"/>
<protein>
    <recommendedName>
        <fullName evidence="1">dITP/XTP pyrophosphatase</fullName>
        <ecNumber evidence="1">3.6.1.66</ecNumber>
    </recommendedName>
    <alternativeName>
        <fullName evidence="1">Non-canonical purine NTP pyrophosphatase</fullName>
    </alternativeName>
    <alternativeName>
        <fullName evidence="1">Non-standard purine NTP pyrophosphatase</fullName>
    </alternativeName>
    <alternativeName>
        <fullName evidence="1">Nucleoside-triphosphate diphosphatase</fullName>
    </alternativeName>
    <alternativeName>
        <fullName evidence="1">Nucleoside-triphosphate pyrophosphatase</fullName>
        <shortName evidence="1">NTPase</shortName>
    </alternativeName>
</protein>
<keyword id="KW-0378">Hydrolase</keyword>
<keyword id="KW-0460">Magnesium</keyword>
<keyword id="KW-0479">Metal-binding</keyword>
<keyword id="KW-0546">Nucleotide metabolism</keyword>
<keyword id="KW-0547">Nucleotide-binding</keyword>
<keyword id="KW-1185">Reference proteome</keyword>
<accession>B1Y0J8</accession>
<name>IXTPA_LEPCP</name>